<sequence>MNTQQLAKLRSIVPEMRRVRHIHFVGIGGAGMGGIAEVLANEGYQISGSDLAPNPVTQQLTSLGATIFFNHRPENVRDASVVVVSSAISADNPEIVAAHEARIPVIRRAEMLAELMRFRHGIAIAGTHGKTTTTAMVSSIYAEAGLDPTFVNGGLVKAAGVHARLGHSRYLIAEADESDASFLHLQPMVAIVTNIEADHMDTYHGDFENLKQTFINFLHNLPFYGRAVMCVDDPVIRELLPRVGRQTTTYGFSEDADVRVEDYQQIGPQGHFTLLRQGMPDLHVTLNAPGRHNALNAAAAVAVATEEGIDDDAILRALESFQGTGRRFDFLGEFPLEPVNGKAGTAMLVDDYGHHPTEVDATIKAARAGWPDKNLVMLFQPHRYTRTRDLYDDFANVLTQVDALLMLDVYPAGEAPIPGADSRSLCRTIRNRGKIDPILVSDPAQVATMLAPVLTGNDLILVQGAGNVGKIARYLSEIKLKPQIQEEEQHG</sequence>
<reference key="1">
    <citation type="journal article" date="2008" name="Genome Res.">
        <title>Comparative genome analysis of Salmonella enteritidis PT4 and Salmonella gallinarum 287/91 provides insights into evolutionary and host adaptation pathways.</title>
        <authorList>
            <person name="Thomson N.R."/>
            <person name="Clayton D.J."/>
            <person name="Windhorst D."/>
            <person name="Vernikos G."/>
            <person name="Davidson S."/>
            <person name="Churcher C."/>
            <person name="Quail M.A."/>
            <person name="Stevens M."/>
            <person name="Jones M.A."/>
            <person name="Watson M."/>
            <person name="Barron A."/>
            <person name="Layton A."/>
            <person name="Pickard D."/>
            <person name="Kingsley R.A."/>
            <person name="Bignell A."/>
            <person name="Clark L."/>
            <person name="Harris B."/>
            <person name="Ormond D."/>
            <person name="Abdellah Z."/>
            <person name="Brooks K."/>
            <person name="Cherevach I."/>
            <person name="Chillingworth T."/>
            <person name="Woodward J."/>
            <person name="Norberczak H."/>
            <person name="Lord A."/>
            <person name="Arrowsmith C."/>
            <person name="Jagels K."/>
            <person name="Moule S."/>
            <person name="Mungall K."/>
            <person name="Saunders M."/>
            <person name="Whitehead S."/>
            <person name="Chabalgoity J.A."/>
            <person name="Maskell D."/>
            <person name="Humphreys T."/>
            <person name="Roberts M."/>
            <person name="Barrow P.A."/>
            <person name="Dougan G."/>
            <person name="Parkhill J."/>
        </authorList>
    </citation>
    <scope>NUCLEOTIDE SEQUENCE [LARGE SCALE GENOMIC DNA]</scope>
    <source>
        <strain>P125109</strain>
    </source>
</reference>
<proteinExistence type="inferred from homology"/>
<dbReference type="EC" id="6.3.2.8" evidence="1"/>
<dbReference type="EMBL" id="AM933172">
    <property type="protein sequence ID" value="CAR31719.1"/>
    <property type="molecule type" value="Genomic_DNA"/>
</dbReference>
<dbReference type="RefSeq" id="WP_001096072.1">
    <property type="nucleotide sequence ID" value="NC_011294.1"/>
</dbReference>
<dbReference type="SMR" id="B5R2M5"/>
<dbReference type="KEGG" id="set:SEN0130"/>
<dbReference type="HOGENOM" id="CLU_028104_2_2_6"/>
<dbReference type="UniPathway" id="UPA00219"/>
<dbReference type="Proteomes" id="UP000000613">
    <property type="component" value="Chromosome"/>
</dbReference>
<dbReference type="GO" id="GO:0005737">
    <property type="term" value="C:cytoplasm"/>
    <property type="evidence" value="ECO:0007669"/>
    <property type="project" value="UniProtKB-SubCell"/>
</dbReference>
<dbReference type="GO" id="GO:0005524">
    <property type="term" value="F:ATP binding"/>
    <property type="evidence" value="ECO:0007669"/>
    <property type="project" value="UniProtKB-UniRule"/>
</dbReference>
<dbReference type="GO" id="GO:0008763">
    <property type="term" value="F:UDP-N-acetylmuramate-L-alanine ligase activity"/>
    <property type="evidence" value="ECO:0007669"/>
    <property type="project" value="UniProtKB-UniRule"/>
</dbReference>
<dbReference type="GO" id="GO:0051301">
    <property type="term" value="P:cell division"/>
    <property type="evidence" value="ECO:0007669"/>
    <property type="project" value="UniProtKB-KW"/>
</dbReference>
<dbReference type="GO" id="GO:0071555">
    <property type="term" value="P:cell wall organization"/>
    <property type="evidence" value="ECO:0007669"/>
    <property type="project" value="UniProtKB-KW"/>
</dbReference>
<dbReference type="GO" id="GO:0009252">
    <property type="term" value="P:peptidoglycan biosynthetic process"/>
    <property type="evidence" value="ECO:0007669"/>
    <property type="project" value="UniProtKB-UniRule"/>
</dbReference>
<dbReference type="GO" id="GO:0008360">
    <property type="term" value="P:regulation of cell shape"/>
    <property type="evidence" value="ECO:0007669"/>
    <property type="project" value="UniProtKB-KW"/>
</dbReference>
<dbReference type="FunFam" id="3.40.1190.10:FF:000001">
    <property type="entry name" value="UDP-N-acetylmuramate--L-alanine ligase"/>
    <property type="match status" value="1"/>
</dbReference>
<dbReference type="FunFam" id="3.40.50.720:FF:000046">
    <property type="entry name" value="UDP-N-acetylmuramate--L-alanine ligase"/>
    <property type="match status" value="1"/>
</dbReference>
<dbReference type="FunFam" id="3.90.190.20:FF:000001">
    <property type="entry name" value="UDP-N-acetylmuramate--L-alanine ligase"/>
    <property type="match status" value="1"/>
</dbReference>
<dbReference type="Gene3D" id="3.90.190.20">
    <property type="entry name" value="Mur ligase, C-terminal domain"/>
    <property type="match status" value="1"/>
</dbReference>
<dbReference type="Gene3D" id="3.40.1190.10">
    <property type="entry name" value="Mur-like, catalytic domain"/>
    <property type="match status" value="1"/>
</dbReference>
<dbReference type="Gene3D" id="3.40.50.720">
    <property type="entry name" value="NAD(P)-binding Rossmann-like Domain"/>
    <property type="match status" value="1"/>
</dbReference>
<dbReference type="HAMAP" id="MF_00046">
    <property type="entry name" value="MurC"/>
    <property type="match status" value="1"/>
</dbReference>
<dbReference type="InterPro" id="IPR036565">
    <property type="entry name" value="Mur-like_cat_sf"/>
</dbReference>
<dbReference type="InterPro" id="IPR004101">
    <property type="entry name" value="Mur_ligase_C"/>
</dbReference>
<dbReference type="InterPro" id="IPR036615">
    <property type="entry name" value="Mur_ligase_C_dom_sf"/>
</dbReference>
<dbReference type="InterPro" id="IPR013221">
    <property type="entry name" value="Mur_ligase_cen"/>
</dbReference>
<dbReference type="InterPro" id="IPR000713">
    <property type="entry name" value="Mur_ligase_N"/>
</dbReference>
<dbReference type="InterPro" id="IPR050061">
    <property type="entry name" value="MurCDEF_pg_biosynth"/>
</dbReference>
<dbReference type="InterPro" id="IPR005758">
    <property type="entry name" value="UDP-N-AcMur_Ala_ligase_MurC"/>
</dbReference>
<dbReference type="NCBIfam" id="TIGR01082">
    <property type="entry name" value="murC"/>
    <property type="match status" value="1"/>
</dbReference>
<dbReference type="PANTHER" id="PTHR43445:SF3">
    <property type="entry name" value="UDP-N-ACETYLMURAMATE--L-ALANINE LIGASE"/>
    <property type="match status" value="1"/>
</dbReference>
<dbReference type="PANTHER" id="PTHR43445">
    <property type="entry name" value="UDP-N-ACETYLMURAMATE--L-ALANINE LIGASE-RELATED"/>
    <property type="match status" value="1"/>
</dbReference>
<dbReference type="Pfam" id="PF01225">
    <property type="entry name" value="Mur_ligase"/>
    <property type="match status" value="1"/>
</dbReference>
<dbReference type="Pfam" id="PF02875">
    <property type="entry name" value="Mur_ligase_C"/>
    <property type="match status" value="1"/>
</dbReference>
<dbReference type="Pfam" id="PF08245">
    <property type="entry name" value="Mur_ligase_M"/>
    <property type="match status" value="1"/>
</dbReference>
<dbReference type="SUPFAM" id="SSF51984">
    <property type="entry name" value="MurCD N-terminal domain"/>
    <property type="match status" value="1"/>
</dbReference>
<dbReference type="SUPFAM" id="SSF53623">
    <property type="entry name" value="MurD-like peptide ligases, catalytic domain"/>
    <property type="match status" value="1"/>
</dbReference>
<dbReference type="SUPFAM" id="SSF53244">
    <property type="entry name" value="MurD-like peptide ligases, peptide-binding domain"/>
    <property type="match status" value="1"/>
</dbReference>
<protein>
    <recommendedName>
        <fullName evidence="1">UDP-N-acetylmuramate--L-alanine ligase</fullName>
        <ecNumber evidence="1">6.3.2.8</ecNumber>
    </recommendedName>
    <alternativeName>
        <fullName evidence="1">UDP-N-acetylmuramoyl-L-alanine synthetase</fullName>
    </alternativeName>
</protein>
<organism>
    <name type="scientific">Salmonella enteritidis PT4 (strain P125109)</name>
    <dbReference type="NCBI Taxonomy" id="550537"/>
    <lineage>
        <taxon>Bacteria</taxon>
        <taxon>Pseudomonadati</taxon>
        <taxon>Pseudomonadota</taxon>
        <taxon>Gammaproteobacteria</taxon>
        <taxon>Enterobacterales</taxon>
        <taxon>Enterobacteriaceae</taxon>
        <taxon>Salmonella</taxon>
    </lineage>
</organism>
<feature type="chain" id="PRO_1000091130" description="UDP-N-acetylmuramate--L-alanine ligase">
    <location>
        <begin position="1"/>
        <end position="491"/>
    </location>
</feature>
<feature type="binding site" evidence="1">
    <location>
        <begin position="126"/>
        <end position="132"/>
    </location>
    <ligand>
        <name>ATP</name>
        <dbReference type="ChEBI" id="CHEBI:30616"/>
    </ligand>
</feature>
<comment type="function">
    <text evidence="1">Cell wall formation.</text>
</comment>
<comment type="catalytic activity">
    <reaction evidence="1">
        <text>UDP-N-acetyl-alpha-D-muramate + L-alanine + ATP = UDP-N-acetyl-alpha-D-muramoyl-L-alanine + ADP + phosphate + H(+)</text>
        <dbReference type="Rhea" id="RHEA:23372"/>
        <dbReference type="ChEBI" id="CHEBI:15378"/>
        <dbReference type="ChEBI" id="CHEBI:30616"/>
        <dbReference type="ChEBI" id="CHEBI:43474"/>
        <dbReference type="ChEBI" id="CHEBI:57972"/>
        <dbReference type="ChEBI" id="CHEBI:70757"/>
        <dbReference type="ChEBI" id="CHEBI:83898"/>
        <dbReference type="ChEBI" id="CHEBI:456216"/>
        <dbReference type="EC" id="6.3.2.8"/>
    </reaction>
</comment>
<comment type="pathway">
    <text evidence="1">Cell wall biogenesis; peptidoglycan biosynthesis.</text>
</comment>
<comment type="subcellular location">
    <subcellularLocation>
        <location evidence="1">Cytoplasm</location>
    </subcellularLocation>
</comment>
<comment type="similarity">
    <text evidence="1">Belongs to the MurCDEF family.</text>
</comment>
<gene>
    <name evidence="1" type="primary">murC</name>
    <name type="ordered locus">SEN0130</name>
</gene>
<accession>B5R2M5</accession>
<evidence type="ECO:0000255" key="1">
    <source>
        <dbReference type="HAMAP-Rule" id="MF_00046"/>
    </source>
</evidence>
<name>MURC_SALEP</name>
<keyword id="KW-0067">ATP-binding</keyword>
<keyword id="KW-0131">Cell cycle</keyword>
<keyword id="KW-0132">Cell division</keyword>
<keyword id="KW-0133">Cell shape</keyword>
<keyword id="KW-0961">Cell wall biogenesis/degradation</keyword>
<keyword id="KW-0963">Cytoplasm</keyword>
<keyword id="KW-0436">Ligase</keyword>
<keyword id="KW-0547">Nucleotide-binding</keyword>
<keyword id="KW-0573">Peptidoglycan synthesis</keyword>